<accession>P85913</accession>
<reference key="1">
    <citation type="journal article" date="2008" name="J. Proteomics">
        <title>A proteomics approach to identify proteins differentially expressed in Douglas-fir seedlings infected by Phellinus sulphurascens.</title>
        <authorList>
            <person name="Islam M.A."/>
            <person name="Sturrock R.N."/>
            <person name="Ekramoddoullah A.K.M."/>
        </authorList>
    </citation>
    <scope>IDENTIFICATION BY MASS SPECTROMETRY</scope>
</reference>
<proteinExistence type="evidence at protein level"/>
<evidence type="ECO:0000250" key="1">
    <source>
        <dbReference type="UniProtKB" id="O49482"/>
    </source>
</evidence>
<evidence type="ECO:0000250" key="2">
    <source>
        <dbReference type="UniProtKB" id="Q08350"/>
    </source>
</evidence>
<evidence type="ECO:0000255" key="3"/>
<evidence type="ECO:0000303" key="4">
    <source>
    </source>
</evidence>
<feature type="chain" id="PRO_0000371717" description="Probable cinnamyl alcohol dehydrogenase 1">
    <location>
        <begin position="1" status="less than"/>
        <end position="20" status="greater than"/>
    </location>
</feature>
<feature type="non-consecutive residues" evidence="4">
    <location>
        <begin position="8"/>
        <end position="9"/>
    </location>
</feature>
<feature type="non-terminal residue" evidence="4">
    <location>
        <position position="1"/>
    </location>
</feature>
<feature type="non-terminal residue" evidence="4">
    <location>
        <position position="20"/>
    </location>
</feature>
<sequence>MGSLESERFVVDVAASNLDK</sequence>
<keyword id="KW-0438">Lignin biosynthesis</keyword>
<keyword id="KW-0479">Metal-binding</keyword>
<keyword id="KW-0521">NADP</keyword>
<keyword id="KW-0560">Oxidoreductase</keyword>
<keyword id="KW-0862">Zinc</keyword>
<organism>
    <name type="scientific">Pseudotsuga menziesii</name>
    <name type="common">Douglas-fir</name>
    <name type="synonym">Abies menziesii</name>
    <dbReference type="NCBI Taxonomy" id="3357"/>
    <lineage>
        <taxon>Eukaryota</taxon>
        <taxon>Viridiplantae</taxon>
        <taxon>Streptophyta</taxon>
        <taxon>Embryophyta</taxon>
        <taxon>Tracheophyta</taxon>
        <taxon>Spermatophyta</taxon>
        <taxon>Pinopsida</taxon>
        <taxon>Pinidae</taxon>
        <taxon>Conifers I</taxon>
        <taxon>Pinales</taxon>
        <taxon>Pinaceae</taxon>
        <taxon>Pseudotsuga</taxon>
    </lineage>
</organism>
<protein>
    <recommendedName>
        <fullName>Probable cinnamyl alcohol dehydrogenase 1</fullName>
        <shortName evidence="2">CAD 1</shortName>
        <ecNumber evidence="1">1.1.1.195</ecNumber>
    </recommendedName>
</protein>
<comment type="function">
    <text evidence="1">Involved in lignin biosynthesis. Catalyzes the final step specific for the production of lignin monomers, like coniferyl alcohol, sinapyl alcohol and 4-coumaryl alcohol (By similarity).</text>
</comment>
<comment type="catalytic activity">
    <reaction evidence="1">
        <text>(E)-cinnamyl alcohol + NADP(+) = (E)-cinnamaldehyde + NADPH + H(+)</text>
        <dbReference type="Rhea" id="RHEA:10392"/>
        <dbReference type="ChEBI" id="CHEBI:15378"/>
        <dbReference type="ChEBI" id="CHEBI:16731"/>
        <dbReference type="ChEBI" id="CHEBI:33227"/>
        <dbReference type="ChEBI" id="CHEBI:57783"/>
        <dbReference type="ChEBI" id="CHEBI:58349"/>
        <dbReference type="EC" id="1.1.1.195"/>
    </reaction>
    <physiologicalReaction direction="right-to-left" evidence="1">
        <dbReference type="Rhea" id="RHEA:10394"/>
    </physiologicalReaction>
</comment>
<comment type="catalytic activity">
    <reaction evidence="1">
        <text>(E)-coniferol + NADP(+) = (E)-coniferaldehyde + NADPH + H(+)</text>
        <dbReference type="Rhea" id="RHEA:22444"/>
        <dbReference type="ChEBI" id="CHEBI:15378"/>
        <dbReference type="ChEBI" id="CHEBI:16547"/>
        <dbReference type="ChEBI" id="CHEBI:17745"/>
        <dbReference type="ChEBI" id="CHEBI:57783"/>
        <dbReference type="ChEBI" id="CHEBI:58349"/>
        <dbReference type="EC" id="1.1.1.195"/>
    </reaction>
    <physiologicalReaction direction="right-to-left" evidence="1">
        <dbReference type="Rhea" id="RHEA:22446"/>
    </physiologicalReaction>
</comment>
<comment type="catalytic activity">
    <reaction evidence="1">
        <text>(E)-sinapyl alcohol + NADP(+) = (E)-sinapaldehyde + NADPH + H(+)</text>
        <dbReference type="Rhea" id="RHEA:45704"/>
        <dbReference type="ChEBI" id="CHEBI:15378"/>
        <dbReference type="ChEBI" id="CHEBI:27949"/>
        <dbReference type="ChEBI" id="CHEBI:57783"/>
        <dbReference type="ChEBI" id="CHEBI:58349"/>
        <dbReference type="ChEBI" id="CHEBI:64557"/>
        <dbReference type="EC" id="1.1.1.195"/>
    </reaction>
    <physiologicalReaction direction="right-to-left" evidence="1">
        <dbReference type="Rhea" id="RHEA:45706"/>
    </physiologicalReaction>
</comment>
<comment type="catalytic activity">
    <reaction evidence="1">
        <text>(E)-4-coumaroyl alcohol + NADP(+) = (E)-4-coumaraldehyde + NADPH + H(+)</text>
        <dbReference type="Rhea" id="RHEA:45724"/>
        <dbReference type="ChEBI" id="CHEBI:15378"/>
        <dbReference type="ChEBI" id="CHEBI:28353"/>
        <dbReference type="ChEBI" id="CHEBI:57783"/>
        <dbReference type="ChEBI" id="CHEBI:58349"/>
        <dbReference type="ChEBI" id="CHEBI:64555"/>
        <dbReference type="EC" id="1.1.1.195"/>
    </reaction>
    <physiologicalReaction direction="right-to-left" evidence="1">
        <dbReference type="Rhea" id="RHEA:45726"/>
    </physiologicalReaction>
</comment>
<comment type="catalytic activity">
    <reaction evidence="1">
        <text>(E)-caffeyl alcohol + NADP(+) = (E)-caffeyl aldehyde + NADPH + H(+)</text>
        <dbReference type="Rhea" id="RHEA:45728"/>
        <dbReference type="ChEBI" id="CHEBI:15378"/>
        <dbReference type="ChEBI" id="CHEBI:28323"/>
        <dbReference type="ChEBI" id="CHEBI:31334"/>
        <dbReference type="ChEBI" id="CHEBI:57783"/>
        <dbReference type="ChEBI" id="CHEBI:58349"/>
    </reaction>
    <physiologicalReaction direction="right-to-left" evidence="1">
        <dbReference type="Rhea" id="RHEA:45730"/>
    </physiologicalReaction>
</comment>
<comment type="cofactor">
    <cofactor evidence="2">
        <name>Zn(2+)</name>
        <dbReference type="ChEBI" id="CHEBI:29105"/>
    </cofactor>
    <text evidence="2">Binds 2 Zn(2+) ions per subunit.</text>
</comment>
<comment type="pathway">
    <text evidence="2">Aromatic compound metabolism; phenylpropanoid biosynthesis.</text>
</comment>
<comment type="similarity">
    <text evidence="3">Belongs to the zinc-containing alcohol dehydrogenase family.</text>
</comment>
<name>CADH1_PSEMZ</name>
<dbReference type="EC" id="1.1.1.195" evidence="1"/>
<dbReference type="UniPathway" id="UPA00711"/>
<dbReference type="GO" id="GO:0045551">
    <property type="term" value="F:cinnamyl-alcohol dehydrogenase activity"/>
    <property type="evidence" value="ECO:0007669"/>
    <property type="project" value="UniProtKB-EC"/>
</dbReference>
<dbReference type="GO" id="GO:0050268">
    <property type="term" value="F:coniferyl-alcohol dehydrogenase activity"/>
    <property type="evidence" value="ECO:0007669"/>
    <property type="project" value="RHEA"/>
</dbReference>
<dbReference type="GO" id="GO:0046872">
    <property type="term" value="F:metal ion binding"/>
    <property type="evidence" value="ECO:0007669"/>
    <property type="project" value="UniProtKB-KW"/>
</dbReference>
<dbReference type="GO" id="GO:0009809">
    <property type="term" value="P:lignin biosynthetic process"/>
    <property type="evidence" value="ECO:0007669"/>
    <property type="project" value="UniProtKB-KW"/>
</dbReference>